<proteinExistence type="evidence at protein level"/>
<keyword id="KW-0903">Direct protein sequencing</keyword>
<keyword id="KW-0343">GTPase activation</keyword>
<keyword id="KW-1185">Reference proteome</keyword>
<accession>P84107</accession>
<feature type="chain" id="PRO_0000097324" description="Rho-GTPase-activating protein">
    <location>
        <begin position="1" status="less than"/>
        <end position="9" status="greater than"/>
    </location>
</feature>
<feature type="unsure residue" description="L or I">
    <location>
        <position position="1"/>
    </location>
</feature>
<feature type="unsure residue" description="L or I">
    <location>
        <position position="9"/>
    </location>
</feature>
<feature type="non-terminal residue">
    <location>
        <position position="1"/>
    </location>
</feature>
<feature type="non-terminal residue">
    <location>
        <position position="9"/>
    </location>
</feature>
<dbReference type="InParanoid" id="P84107"/>
<dbReference type="Proteomes" id="UP000002494">
    <property type="component" value="Unplaced"/>
</dbReference>
<dbReference type="GO" id="GO:0005096">
    <property type="term" value="F:GTPase activator activity"/>
    <property type="evidence" value="ECO:0007669"/>
    <property type="project" value="UniProtKB-KW"/>
</dbReference>
<organism>
    <name type="scientific">Rattus norvegicus</name>
    <name type="common">Rat</name>
    <dbReference type="NCBI Taxonomy" id="10116"/>
    <lineage>
        <taxon>Eukaryota</taxon>
        <taxon>Metazoa</taxon>
        <taxon>Chordata</taxon>
        <taxon>Craniata</taxon>
        <taxon>Vertebrata</taxon>
        <taxon>Euteleostomi</taxon>
        <taxon>Mammalia</taxon>
        <taxon>Eutheria</taxon>
        <taxon>Euarchontoglires</taxon>
        <taxon>Glires</taxon>
        <taxon>Rodentia</taxon>
        <taxon>Myomorpha</taxon>
        <taxon>Muroidea</taxon>
        <taxon>Muridae</taxon>
        <taxon>Murinae</taxon>
        <taxon>Rattus</taxon>
    </lineage>
</organism>
<comment type="function">
    <text evidence="1">May keep Rho-GTPase in a GDP-bound form.</text>
</comment>
<comment type="subunit">
    <text>May bind to Rho-GTPase.</text>
</comment>
<comment type="induction">
    <text evidence="1">In response to ultrasound associated with a high frequency electromagnetic field.</text>
</comment>
<comment type="mass spectrometry"/>
<evidence type="ECO:0000269" key="1">
    <source ref="1"/>
</evidence>
<evidence type="ECO:0000305" key="2"/>
<name>RHG_RAT</name>
<protein>
    <recommendedName>
        <fullName>Rho-GTPase-activating protein</fullName>
    </recommendedName>
</protein>
<sequence>LFEENGGAL</sequence>
<reference evidence="2" key="1">
    <citation type="submission" date="2004-07" db="UniProtKB">
        <authorList>
            <person name="Chang I.-F."/>
            <person name="Hsiao H.-Y."/>
        </authorList>
    </citation>
    <scope>PROTEIN SEQUENCE</scope>
    <scope>FUNCTION</scope>
    <scope>INDUCTION</scope>
    <scope>MASS SPECTROMETRY</scope>
    <source>
        <strain>Sprague-Dawley</strain>
        <tissue>Brain</tissue>
    </source>
</reference>